<feature type="chain" id="PRO_0000214519" description="Probable Fe(2+)-trafficking protein">
    <location>
        <begin position="1"/>
        <end position="90"/>
    </location>
</feature>
<feature type="sequence conflict" description="In Ref. 3; AAS63643." evidence="2" ref="3">
    <original>R</original>
    <variation>G</variation>
    <location>
        <position position="16"/>
    </location>
</feature>
<accession>Q8ZHE7</accession>
<accession>Q0WI89</accession>
<protein>
    <recommendedName>
        <fullName evidence="1">Probable Fe(2+)-trafficking protein</fullName>
    </recommendedName>
</protein>
<reference key="1">
    <citation type="journal article" date="2001" name="Nature">
        <title>Genome sequence of Yersinia pestis, the causative agent of plague.</title>
        <authorList>
            <person name="Parkhill J."/>
            <person name="Wren B.W."/>
            <person name="Thomson N.R."/>
            <person name="Titball R.W."/>
            <person name="Holden M.T.G."/>
            <person name="Prentice M.B."/>
            <person name="Sebaihia M."/>
            <person name="James K.D."/>
            <person name="Churcher C.M."/>
            <person name="Mungall K.L."/>
            <person name="Baker S."/>
            <person name="Basham D."/>
            <person name="Bentley S.D."/>
            <person name="Brooks K."/>
            <person name="Cerdeno-Tarraga A.-M."/>
            <person name="Chillingworth T."/>
            <person name="Cronin A."/>
            <person name="Davies R.M."/>
            <person name="Davis P."/>
            <person name="Dougan G."/>
            <person name="Feltwell T."/>
            <person name="Hamlin N."/>
            <person name="Holroyd S."/>
            <person name="Jagels K."/>
            <person name="Karlyshev A.V."/>
            <person name="Leather S."/>
            <person name="Moule S."/>
            <person name="Oyston P.C.F."/>
            <person name="Quail M.A."/>
            <person name="Rutherford K.M."/>
            <person name="Simmonds M."/>
            <person name="Skelton J."/>
            <person name="Stevens K."/>
            <person name="Whitehead S."/>
            <person name="Barrell B.G."/>
        </authorList>
    </citation>
    <scope>NUCLEOTIDE SEQUENCE [LARGE SCALE GENOMIC DNA]</scope>
    <source>
        <strain>CO-92 / Biovar Orientalis</strain>
    </source>
</reference>
<reference key="2">
    <citation type="journal article" date="2002" name="J. Bacteriol.">
        <title>Genome sequence of Yersinia pestis KIM.</title>
        <authorList>
            <person name="Deng W."/>
            <person name="Burland V."/>
            <person name="Plunkett G. III"/>
            <person name="Boutin A."/>
            <person name="Mayhew G.F."/>
            <person name="Liss P."/>
            <person name="Perna N.T."/>
            <person name="Rose D.J."/>
            <person name="Mau B."/>
            <person name="Zhou S."/>
            <person name="Schwartz D.C."/>
            <person name="Fetherston J.D."/>
            <person name="Lindler L.E."/>
            <person name="Brubaker R.R."/>
            <person name="Plano G.V."/>
            <person name="Straley S.C."/>
            <person name="McDonough K.A."/>
            <person name="Nilles M.L."/>
            <person name="Matson J.S."/>
            <person name="Blattner F.R."/>
            <person name="Perry R.D."/>
        </authorList>
    </citation>
    <scope>NUCLEOTIDE SEQUENCE [LARGE SCALE GENOMIC DNA]</scope>
    <source>
        <strain>KIM10+ / Biovar Mediaevalis</strain>
    </source>
</reference>
<reference key="3">
    <citation type="journal article" date="2004" name="DNA Res.">
        <title>Complete genome sequence of Yersinia pestis strain 91001, an isolate avirulent to humans.</title>
        <authorList>
            <person name="Song Y."/>
            <person name="Tong Z."/>
            <person name="Wang J."/>
            <person name="Wang L."/>
            <person name="Guo Z."/>
            <person name="Han Y."/>
            <person name="Zhang J."/>
            <person name="Pei D."/>
            <person name="Zhou D."/>
            <person name="Qin H."/>
            <person name="Pang X."/>
            <person name="Han Y."/>
            <person name="Zhai J."/>
            <person name="Li M."/>
            <person name="Cui B."/>
            <person name="Qi Z."/>
            <person name="Jin L."/>
            <person name="Dai R."/>
            <person name="Chen F."/>
            <person name="Li S."/>
            <person name="Ye C."/>
            <person name="Du Z."/>
            <person name="Lin W."/>
            <person name="Wang J."/>
            <person name="Yu J."/>
            <person name="Yang H."/>
            <person name="Wang J."/>
            <person name="Huang P."/>
            <person name="Yang R."/>
        </authorList>
    </citation>
    <scope>NUCLEOTIDE SEQUENCE [LARGE SCALE GENOMIC DNA]</scope>
    <source>
        <strain>91001 / Biovar Mediaevalis</strain>
    </source>
</reference>
<evidence type="ECO:0000255" key="1">
    <source>
        <dbReference type="HAMAP-Rule" id="MF_00686"/>
    </source>
</evidence>
<evidence type="ECO:0000305" key="2"/>
<comment type="function">
    <text evidence="1">Could be a mediator in iron transactions between iron acquisition and iron-requiring processes, such as synthesis and/or repair of Fe-S clusters in biosynthetic enzymes.</text>
</comment>
<comment type="subunit">
    <text evidence="1">Monomer.</text>
</comment>
<comment type="similarity">
    <text evidence="1">Belongs to the Fe(2+)-trafficking protein family.</text>
</comment>
<proteinExistence type="inferred from homology"/>
<keyword id="KW-0408">Iron</keyword>
<keyword id="KW-1185">Reference proteome</keyword>
<organism>
    <name type="scientific">Yersinia pestis</name>
    <dbReference type="NCBI Taxonomy" id="632"/>
    <lineage>
        <taxon>Bacteria</taxon>
        <taxon>Pseudomonadati</taxon>
        <taxon>Pseudomonadota</taxon>
        <taxon>Gammaproteobacteria</taxon>
        <taxon>Enterobacterales</taxon>
        <taxon>Yersiniaceae</taxon>
        <taxon>Yersinia</taxon>
    </lineage>
</organism>
<sequence length="90" mass="10707">MSRTIFCTFLKKDAERQDFQLYPGEIGKRIYNEISKEAWSQWITKQTMLINEKKLSMMNIEDRKLLEQEMVNFLFEGQDVHIAGYTPPSK</sequence>
<name>FETP_YERPE</name>
<gene>
    <name type="ordered locus">YPO0953</name>
    <name type="ordered locus">y3340</name>
    <name type="ordered locus">YP_3488</name>
</gene>
<dbReference type="EMBL" id="AL590842">
    <property type="protein sequence ID" value="CAL19619.1"/>
    <property type="molecule type" value="Genomic_DNA"/>
</dbReference>
<dbReference type="EMBL" id="AE009952">
    <property type="protein sequence ID" value="AAM86890.1"/>
    <property type="molecule type" value="Genomic_DNA"/>
</dbReference>
<dbReference type="EMBL" id="AE017042">
    <property type="protein sequence ID" value="AAS63643.1"/>
    <property type="molecule type" value="Genomic_DNA"/>
</dbReference>
<dbReference type="PIR" id="AI0116">
    <property type="entry name" value="AI0116"/>
</dbReference>
<dbReference type="RefSeq" id="WP_002209994.1">
    <property type="nucleotide sequence ID" value="NZ_WUCM01000030.1"/>
</dbReference>
<dbReference type="RefSeq" id="YP_002345999.1">
    <property type="nucleotide sequence ID" value="NC_003143.1"/>
</dbReference>
<dbReference type="SMR" id="Q8ZHE7"/>
<dbReference type="STRING" id="214092.YPO0953"/>
<dbReference type="PaxDb" id="214092-YPO0953"/>
<dbReference type="DNASU" id="1148287"/>
<dbReference type="EnsemblBacteria" id="AAS63643">
    <property type="protein sequence ID" value="AAS63643"/>
    <property type="gene ID" value="YP_3488"/>
</dbReference>
<dbReference type="KEGG" id="ype:YPO0953"/>
<dbReference type="KEGG" id="ypk:y3340"/>
<dbReference type="KEGG" id="ypm:YP_3488"/>
<dbReference type="PATRIC" id="fig|214092.21.peg.1233"/>
<dbReference type="eggNOG" id="COG2924">
    <property type="taxonomic scope" value="Bacteria"/>
</dbReference>
<dbReference type="HOGENOM" id="CLU_170994_0_0_6"/>
<dbReference type="OMA" id="NCIKLGR"/>
<dbReference type="OrthoDB" id="9804318at2"/>
<dbReference type="Proteomes" id="UP000000815">
    <property type="component" value="Chromosome"/>
</dbReference>
<dbReference type="Proteomes" id="UP000001019">
    <property type="component" value="Chromosome"/>
</dbReference>
<dbReference type="Proteomes" id="UP000002490">
    <property type="component" value="Chromosome"/>
</dbReference>
<dbReference type="GO" id="GO:0005829">
    <property type="term" value="C:cytosol"/>
    <property type="evidence" value="ECO:0000318"/>
    <property type="project" value="GO_Central"/>
</dbReference>
<dbReference type="GO" id="GO:0005506">
    <property type="term" value="F:iron ion binding"/>
    <property type="evidence" value="ECO:0007669"/>
    <property type="project" value="UniProtKB-UniRule"/>
</dbReference>
<dbReference type="GO" id="GO:0034599">
    <property type="term" value="P:cellular response to oxidative stress"/>
    <property type="evidence" value="ECO:0000318"/>
    <property type="project" value="GO_Central"/>
</dbReference>
<dbReference type="FunFam" id="1.10.3880.10:FF:000001">
    <property type="entry name" value="Probable Fe(2+)-trafficking protein"/>
    <property type="match status" value="1"/>
</dbReference>
<dbReference type="Gene3D" id="1.10.3880.10">
    <property type="entry name" value="Fe(II) trafficking protein YggX"/>
    <property type="match status" value="1"/>
</dbReference>
<dbReference type="HAMAP" id="MF_00686">
    <property type="entry name" value="Fe_traffic_YggX"/>
    <property type="match status" value="1"/>
</dbReference>
<dbReference type="InterPro" id="IPR007457">
    <property type="entry name" value="Fe_traffick_prot_YggX"/>
</dbReference>
<dbReference type="InterPro" id="IPR036766">
    <property type="entry name" value="Fe_traffick_prot_YggX_sf"/>
</dbReference>
<dbReference type="NCBIfam" id="NF003817">
    <property type="entry name" value="PRK05408.1"/>
    <property type="match status" value="1"/>
</dbReference>
<dbReference type="PANTHER" id="PTHR36965">
    <property type="entry name" value="FE(2+)-TRAFFICKING PROTEIN-RELATED"/>
    <property type="match status" value="1"/>
</dbReference>
<dbReference type="PANTHER" id="PTHR36965:SF1">
    <property type="entry name" value="FE(2+)-TRAFFICKING PROTEIN-RELATED"/>
    <property type="match status" value="1"/>
</dbReference>
<dbReference type="Pfam" id="PF04362">
    <property type="entry name" value="Iron_traffic"/>
    <property type="match status" value="1"/>
</dbReference>
<dbReference type="PIRSF" id="PIRSF029827">
    <property type="entry name" value="Fe_traffic_YggX"/>
    <property type="match status" value="1"/>
</dbReference>
<dbReference type="SUPFAM" id="SSF111148">
    <property type="entry name" value="YggX-like"/>
    <property type="match status" value="1"/>
</dbReference>